<sequence>MPVIKVRENEPFDVALRRFKRSCEKAGVLAEVRRREFYEKPTTERKRAKASAVKRHAKKLARENARRTRLY</sequence>
<dbReference type="EMBL" id="AM933173">
    <property type="protein sequence ID" value="CAR38907.1"/>
    <property type="molecule type" value="Genomic_DNA"/>
</dbReference>
<dbReference type="RefSeq" id="WP_001144069.1">
    <property type="nucleotide sequence ID" value="NC_011274.1"/>
</dbReference>
<dbReference type="SMR" id="B5REG7"/>
<dbReference type="GeneID" id="98390195"/>
<dbReference type="KEGG" id="seg:SG3106"/>
<dbReference type="HOGENOM" id="CLU_159258_1_0_6"/>
<dbReference type="Proteomes" id="UP000008321">
    <property type="component" value="Chromosome"/>
</dbReference>
<dbReference type="GO" id="GO:1990904">
    <property type="term" value="C:ribonucleoprotein complex"/>
    <property type="evidence" value="ECO:0007669"/>
    <property type="project" value="UniProtKB-KW"/>
</dbReference>
<dbReference type="GO" id="GO:0005840">
    <property type="term" value="C:ribosome"/>
    <property type="evidence" value="ECO:0007669"/>
    <property type="project" value="UniProtKB-KW"/>
</dbReference>
<dbReference type="GO" id="GO:0003735">
    <property type="term" value="F:structural constituent of ribosome"/>
    <property type="evidence" value="ECO:0007669"/>
    <property type="project" value="InterPro"/>
</dbReference>
<dbReference type="GO" id="GO:0006412">
    <property type="term" value="P:translation"/>
    <property type="evidence" value="ECO:0007669"/>
    <property type="project" value="UniProtKB-UniRule"/>
</dbReference>
<dbReference type="FunFam" id="1.20.5.1150:FF:000001">
    <property type="entry name" value="30S ribosomal protein S21"/>
    <property type="match status" value="1"/>
</dbReference>
<dbReference type="Gene3D" id="1.20.5.1150">
    <property type="entry name" value="Ribosomal protein S8"/>
    <property type="match status" value="1"/>
</dbReference>
<dbReference type="HAMAP" id="MF_00358">
    <property type="entry name" value="Ribosomal_bS21"/>
    <property type="match status" value="1"/>
</dbReference>
<dbReference type="InterPro" id="IPR001911">
    <property type="entry name" value="Ribosomal_bS21"/>
</dbReference>
<dbReference type="InterPro" id="IPR018278">
    <property type="entry name" value="Ribosomal_bS21_CS"/>
</dbReference>
<dbReference type="InterPro" id="IPR038380">
    <property type="entry name" value="Ribosomal_bS21_sf"/>
</dbReference>
<dbReference type="NCBIfam" id="TIGR00030">
    <property type="entry name" value="S21p"/>
    <property type="match status" value="1"/>
</dbReference>
<dbReference type="PANTHER" id="PTHR21109">
    <property type="entry name" value="MITOCHONDRIAL 28S RIBOSOMAL PROTEIN S21"/>
    <property type="match status" value="1"/>
</dbReference>
<dbReference type="PANTHER" id="PTHR21109:SF22">
    <property type="entry name" value="SMALL RIBOSOMAL SUBUNIT PROTEIN BS21"/>
    <property type="match status" value="1"/>
</dbReference>
<dbReference type="Pfam" id="PF01165">
    <property type="entry name" value="Ribosomal_S21"/>
    <property type="match status" value="1"/>
</dbReference>
<dbReference type="PRINTS" id="PR00976">
    <property type="entry name" value="RIBOSOMALS21"/>
</dbReference>
<dbReference type="PROSITE" id="PS01181">
    <property type="entry name" value="RIBOSOMAL_S21"/>
    <property type="match status" value="1"/>
</dbReference>
<reference key="1">
    <citation type="journal article" date="2008" name="Genome Res.">
        <title>Comparative genome analysis of Salmonella enteritidis PT4 and Salmonella gallinarum 287/91 provides insights into evolutionary and host adaptation pathways.</title>
        <authorList>
            <person name="Thomson N.R."/>
            <person name="Clayton D.J."/>
            <person name="Windhorst D."/>
            <person name="Vernikos G."/>
            <person name="Davidson S."/>
            <person name="Churcher C."/>
            <person name="Quail M.A."/>
            <person name="Stevens M."/>
            <person name="Jones M.A."/>
            <person name="Watson M."/>
            <person name="Barron A."/>
            <person name="Layton A."/>
            <person name="Pickard D."/>
            <person name="Kingsley R.A."/>
            <person name="Bignell A."/>
            <person name="Clark L."/>
            <person name="Harris B."/>
            <person name="Ormond D."/>
            <person name="Abdellah Z."/>
            <person name="Brooks K."/>
            <person name="Cherevach I."/>
            <person name="Chillingworth T."/>
            <person name="Woodward J."/>
            <person name="Norberczak H."/>
            <person name="Lord A."/>
            <person name="Arrowsmith C."/>
            <person name="Jagels K."/>
            <person name="Moule S."/>
            <person name="Mungall K."/>
            <person name="Saunders M."/>
            <person name="Whitehead S."/>
            <person name="Chabalgoity J.A."/>
            <person name="Maskell D."/>
            <person name="Humphreys T."/>
            <person name="Roberts M."/>
            <person name="Barrow P.A."/>
            <person name="Dougan G."/>
            <person name="Parkhill J."/>
        </authorList>
    </citation>
    <scope>NUCLEOTIDE SEQUENCE [LARGE SCALE GENOMIC DNA]</scope>
    <source>
        <strain>287/91 / NCTC 13346</strain>
    </source>
</reference>
<comment type="similarity">
    <text evidence="1">Belongs to the bacterial ribosomal protein bS21 family.</text>
</comment>
<name>RS21_SALG2</name>
<gene>
    <name evidence="1" type="primary">rpsU</name>
    <name type="ordered locus">SG3106</name>
</gene>
<keyword id="KW-0687">Ribonucleoprotein</keyword>
<keyword id="KW-0689">Ribosomal protein</keyword>
<feature type="chain" id="PRO_1000120657" description="Small ribosomal subunit protein bS21">
    <location>
        <begin position="1"/>
        <end position="71"/>
    </location>
</feature>
<feature type="region of interest" description="Disordered" evidence="2">
    <location>
        <begin position="43"/>
        <end position="71"/>
    </location>
</feature>
<feature type="compositionally biased region" description="Basic residues" evidence="2">
    <location>
        <begin position="46"/>
        <end position="59"/>
    </location>
</feature>
<feature type="compositionally biased region" description="Basic and acidic residues" evidence="2">
    <location>
        <begin position="60"/>
        <end position="71"/>
    </location>
</feature>
<evidence type="ECO:0000255" key="1">
    <source>
        <dbReference type="HAMAP-Rule" id="MF_00358"/>
    </source>
</evidence>
<evidence type="ECO:0000256" key="2">
    <source>
        <dbReference type="SAM" id="MobiDB-lite"/>
    </source>
</evidence>
<evidence type="ECO:0000305" key="3"/>
<proteinExistence type="inferred from homology"/>
<protein>
    <recommendedName>
        <fullName evidence="1">Small ribosomal subunit protein bS21</fullName>
    </recommendedName>
    <alternativeName>
        <fullName evidence="3">30S ribosomal protein S21</fullName>
    </alternativeName>
</protein>
<accession>B5REG7</accession>
<organism>
    <name type="scientific">Salmonella gallinarum (strain 287/91 / NCTC 13346)</name>
    <dbReference type="NCBI Taxonomy" id="550538"/>
    <lineage>
        <taxon>Bacteria</taxon>
        <taxon>Pseudomonadati</taxon>
        <taxon>Pseudomonadota</taxon>
        <taxon>Gammaproteobacteria</taxon>
        <taxon>Enterobacterales</taxon>
        <taxon>Enterobacteriaceae</taxon>
        <taxon>Salmonella</taxon>
    </lineage>
</organism>